<feature type="chain" id="PRO_1000057732" description="UDP-N-acetylglucosamine 1-carboxyvinyltransferase">
    <location>
        <begin position="1"/>
        <end position="419"/>
    </location>
</feature>
<feature type="active site" description="Proton donor" evidence="1">
    <location>
        <position position="119"/>
    </location>
</feature>
<feature type="binding site" evidence="1">
    <location>
        <begin position="22"/>
        <end position="23"/>
    </location>
    <ligand>
        <name>phosphoenolpyruvate</name>
        <dbReference type="ChEBI" id="CHEBI:58702"/>
    </ligand>
</feature>
<feature type="binding site" evidence="1">
    <location>
        <position position="95"/>
    </location>
    <ligand>
        <name>UDP-N-acetyl-alpha-D-glucosamine</name>
        <dbReference type="ChEBI" id="CHEBI:57705"/>
    </ligand>
</feature>
<feature type="binding site" evidence="1">
    <location>
        <begin position="164"/>
        <end position="167"/>
    </location>
    <ligand>
        <name>UDP-N-acetyl-alpha-D-glucosamine</name>
        <dbReference type="ChEBI" id="CHEBI:57705"/>
    </ligand>
</feature>
<feature type="binding site" evidence="1">
    <location>
        <position position="308"/>
    </location>
    <ligand>
        <name>UDP-N-acetyl-alpha-D-glucosamine</name>
        <dbReference type="ChEBI" id="CHEBI:57705"/>
    </ligand>
</feature>
<feature type="binding site" evidence="1">
    <location>
        <position position="330"/>
    </location>
    <ligand>
        <name>UDP-N-acetyl-alpha-D-glucosamine</name>
        <dbReference type="ChEBI" id="CHEBI:57705"/>
    </ligand>
</feature>
<feature type="modified residue" description="2-(S-cysteinyl)pyruvic acid O-phosphothioketal" evidence="1">
    <location>
        <position position="119"/>
    </location>
</feature>
<accession>A8F259</accession>
<evidence type="ECO:0000255" key="1">
    <source>
        <dbReference type="HAMAP-Rule" id="MF_00111"/>
    </source>
</evidence>
<proteinExistence type="inferred from homology"/>
<gene>
    <name evidence="1" type="primary">murA</name>
    <name type="ordered locus">RMA_0916</name>
</gene>
<protein>
    <recommendedName>
        <fullName evidence="1">UDP-N-acetylglucosamine 1-carboxyvinyltransferase</fullName>
        <ecNumber evidence="1">2.5.1.7</ecNumber>
    </recommendedName>
    <alternativeName>
        <fullName evidence="1">Enoylpyruvate transferase</fullName>
    </alternativeName>
    <alternativeName>
        <fullName evidence="1">UDP-N-acetylglucosamine enolpyruvyl transferase</fullName>
        <shortName evidence="1">EPT</shortName>
    </alternativeName>
</protein>
<dbReference type="EC" id="2.5.1.7" evidence="1"/>
<dbReference type="EMBL" id="CP000683">
    <property type="protein sequence ID" value="ABV84995.1"/>
    <property type="molecule type" value="Genomic_DNA"/>
</dbReference>
<dbReference type="RefSeq" id="WP_012152967.1">
    <property type="nucleotide sequence ID" value="NC_009900.1"/>
</dbReference>
<dbReference type="SMR" id="A8F259"/>
<dbReference type="KEGG" id="rms:RMA_0916"/>
<dbReference type="HOGENOM" id="CLU_027387_0_0_5"/>
<dbReference type="UniPathway" id="UPA00219"/>
<dbReference type="Proteomes" id="UP000001311">
    <property type="component" value="Chromosome"/>
</dbReference>
<dbReference type="GO" id="GO:0005737">
    <property type="term" value="C:cytoplasm"/>
    <property type="evidence" value="ECO:0007669"/>
    <property type="project" value="UniProtKB-SubCell"/>
</dbReference>
<dbReference type="GO" id="GO:0008760">
    <property type="term" value="F:UDP-N-acetylglucosamine 1-carboxyvinyltransferase activity"/>
    <property type="evidence" value="ECO:0007669"/>
    <property type="project" value="UniProtKB-UniRule"/>
</dbReference>
<dbReference type="GO" id="GO:0051301">
    <property type="term" value="P:cell division"/>
    <property type="evidence" value="ECO:0007669"/>
    <property type="project" value="UniProtKB-KW"/>
</dbReference>
<dbReference type="GO" id="GO:0071555">
    <property type="term" value="P:cell wall organization"/>
    <property type="evidence" value="ECO:0007669"/>
    <property type="project" value="UniProtKB-KW"/>
</dbReference>
<dbReference type="GO" id="GO:0009252">
    <property type="term" value="P:peptidoglycan biosynthetic process"/>
    <property type="evidence" value="ECO:0007669"/>
    <property type="project" value="UniProtKB-UniRule"/>
</dbReference>
<dbReference type="GO" id="GO:0008360">
    <property type="term" value="P:regulation of cell shape"/>
    <property type="evidence" value="ECO:0007669"/>
    <property type="project" value="UniProtKB-KW"/>
</dbReference>
<dbReference type="GO" id="GO:0019277">
    <property type="term" value="P:UDP-N-acetylgalactosamine biosynthetic process"/>
    <property type="evidence" value="ECO:0007669"/>
    <property type="project" value="InterPro"/>
</dbReference>
<dbReference type="CDD" id="cd01555">
    <property type="entry name" value="UdpNAET"/>
    <property type="match status" value="1"/>
</dbReference>
<dbReference type="FunFam" id="3.65.10.10:FF:000001">
    <property type="entry name" value="UDP-N-acetylglucosamine 1-carboxyvinyltransferase"/>
    <property type="match status" value="1"/>
</dbReference>
<dbReference type="Gene3D" id="3.65.10.10">
    <property type="entry name" value="Enolpyruvate transferase domain"/>
    <property type="match status" value="2"/>
</dbReference>
<dbReference type="HAMAP" id="MF_00111">
    <property type="entry name" value="MurA"/>
    <property type="match status" value="1"/>
</dbReference>
<dbReference type="InterPro" id="IPR001986">
    <property type="entry name" value="Enolpyruvate_Tfrase_dom"/>
</dbReference>
<dbReference type="InterPro" id="IPR036968">
    <property type="entry name" value="Enolpyruvate_Tfrase_sf"/>
</dbReference>
<dbReference type="InterPro" id="IPR050068">
    <property type="entry name" value="MurA_subfamily"/>
</dbReference>
<dbReference type="InterPro" id="IPR013792">
    <property type="entry name" value="RNA3'P_cycl/enolpyr_Trfase_a/b"/>
</dbReference>
<dbReference type="InterPro" id="IPR005750">
    <property type="entry name" value="UDP_GlcNAc_COvinyl_MurA"/>
</dbReference>
<dbReference type="NCBIfam" id="TIGR01072">
    <property type="entry name" value="murA"/>
    <property type="match status" value="1"/>
</dbReference>
<dbReference type="NCBIfam" id="NF006873">
    <property type="entry name" value="PRK09369.1"/>
    <property type="match status" value="1"/>
</dbReference>
<dbReference type="PANTHER" id="PTHR43783">
    <property type="entry name" value="UDP-N-ACETYLGLUCOSAMINE 1-CARBOXYVINYLTRANSFERASE"/>
    <property type="match status" value="1"/>
</dbReference>
<dbReference type="PANTHER" id="PTHR43783:SF1">
    <property type="entry name" value="UDP-N-ACETYLGLUCOSAMINE 1-CARBOXYVINYLTRANSFERASE"/>
    <property type="match status" value="1"/>
</dbReference>
<dbReference type="Pfam" id="PF00275">
    <property type="entry name" value="EPSP_synthase"/>
    <property type="match status" value="1"/>
</dbReference>
<dbReference type="SUPFAM" id="SSF55205">
    <property type="entry name" value="EPT/RTPC-like"/>
    <property type="match status" value="1"/>
</dbReference>
<name>MURA_RICM5</name>
<reference key="1">
    <citation type="journal article" date="2007" name="Genome Res.">
        <title>Lateral gene transfer between obligate intracellular bacteria: evidence from the Rickettsia massiliae genome.</title>
        <authorList>
            <person name="Blanc G."/>
            <person name="Ogata H."/>
            <person name="Robert C."/>
            <person name="Audic S."/>
            <person name="Claverie J.-M."/>
            <person name="Raoult D."/>
        </authorList>
    </citation>
    <scope>NUCLEOTIDE SEQUENCE [LARGE SCALE GENOMIC DNA]</scope>
    <source>
        <strain>Mtu5</strain>
    </source>
</reference>
<organism>
    <name type="scientific">Rickettsia massiliae (strain Mtu5)</name>
    <dbReference type="NCBI Taxonomy" id="416276"/>
    <lineage>
        <taxon>Bacteria</taxon>
        <taxon>Pseudomonadati</taxon>
        <taxon>Pseudomonadota</taxon>
        <taxon>Alphaproteobacteria</taxon>
        <taxon>Rickettsiales</taxon>
        <taxon>Rickettsiaceae</taxon>
        <taxon>Rickettsieae</taxon>
        <taxon>Rickettsia</taxon>
        <taxon>spotted fever group</taxon>
    </lineage>
</organism>
<comment type="function">
    <text evidence="1">Cell wall formation. Adds enolpyruvyl to UDP-N-acetylglucosamine.</text>
</comment>
<comment type="catalytic activity">
    <reaction evidence="1">
        <text>phosphoenolpyruvate + UDP-N-acetyl-alpha-D-glucosamine = UDP-N-acetyl-3-O-(1-carboxyvinyl)-alpha-D-glucosamine + phosphate</text>
        <dbReference type="Rhea" id="RHEA:18681"/>
        <dbReference type="ChEBI" id="CHEBI:43474"/>
        <dbReference type="ChEBI" id="CHEBI:57705"/>
        <dbReference type="ChEBI" id="CHEBI:58702"/>
        <dbReference type="ChEBI" id="CHEBI:68483"/>
        <dbReference type="EC" id="2.5.1.7"/>
    </reaction>
</comment>
<comment type="pathway">
    <text evidence="1">Cell wall biogenesis; peptidoglycan biosynthesis.</text>
</comment>
<comment type="subcellular location">
    <subcellularLocation>
        <location evidence="1">Cytoplasm</location>
    </subcellularLocation>
</comment>
<comment type="similarity">
    <text evidence="1">Belongs to the EPSP synthase family. MurA subfamily.</text>
</comment>
<keyword id="KW-0131">Cell cycle</keyword>
<keyword id="KW-0132">Cell division</keyword>
<keyword id="KW-0133">Cell shape</keyword>
<keyword id="KW-0961">Cell wall biogenesis/degradation</keyword>
<keyword id="KW-0963">Cytoplasm</keyword>
<keyword id="KW-0573">Peptidoglycan synthesis</keyword>
<keyword id="KW-0670">Pyruvate</keyword>
<keyword id="KW-0808">Transferase</keyword>
<sequence length="419" mass="45308">MHKLIIHGGKPLKGSINISGAKNAVLPIMAASILTDKLHITNVPKLTDVGTMKDLLRSHGADIEIIEHQDEFELIINTENINNFTADYEIVRKMRASIWVLGPLLTKYGKAKVSLPGGCAIGARQVDLHIAVLKAMGATIEIEDGYINASSKGRLKGTHFVFDKVSVGATINAILAAVLTEGETVLFNCGREPEIVDLCNCLITMGADIAGIGTSEITIKGKDSLNKASYKVLSDRIEAGTYMFAAAITKGDVKICGIDYHIVENIALKLIETGIKVVPINNGVQVTYEGKLNSVDLETNPYPGFATDLQAQFMSLMTLSSGVSMITENIFENRFMHVPELCRMGADIVVRGNKAVVRGVEMLKGAEVMASDLRASVSLILAGLSTNSKTVLHRIYHLDRGFQDLEKKLSNCGADIKRV</sequence>